<reference key="1">
    <citation type="journal article" date="1996" name="Mech. Dev.">
        <title>Olfaction in birds: differential embryonic expression of nine putative odorant receptor genes in the avian olfactory system.</title>
        <authorList>
            <person name="Nef S."/>
            <person name="Allaman I."/>
            <person name="Fiumelli H."/>
            <person name="de Castro E."/>
            <person name="Nef P."/>
        </authorList>
    </citation>
    <scope>NUCLEOTIDE SEQUENCE [GENOMIC DNA]</scope>
    <source>
        <tissue>Olfactory epithelium</tissue>
    </source>
</reference>
<comment type="function">
    <text evidence="3">Odorant receptor.</text>
</comment>
<comment type="subcellular location">
    <subcellularLocation>
        <location>Cell membrane</location>
        <topology>Multi-pass membrane protein</topology>
    </subcellularLocation>
</comment>
<comment type="similarity">
    <text evidence="2">Belongs to the G-protein coupled receptor 1 family.</text>
</comment>
<keyword id="KW-1003">Cell membrane</keyword>
<keyword id="KW-1015">Disulfide bond</keyword>
<keyword id="KW-0297">G-protein coupled receptor</keyword>
<keyword id="KW-0325">Glycoprotein</keyword>
<keyword id="KW-0472">Membrane</keyword>
<keyword id="KW-0552">Olfaction</keyword>
<keyword id="KW-0675">Receptor</keyword>
<keyword id="KW-1185">Reference proteome</keyword>
<keyword id="KW-0716">Sensory transduction</keyword>
<keyword id="KW-0807">Transducer</keyword>
<keyword id="KW-0812">Transmembrane</keyword>
<keyword id="KW-1133">Transmembrane helix</keyword>
<feature type="chain" id="PRO_0000150883" description="Olfactory receptor-like protein COR4">
    <location>
        <begin position="1"/>
        <end position="312"/>
    </location>
</feature>
<feature type="topological domain" description="Extracellular" evidence="1">
    <location>
        <begin position="1"/>
        <end position="26"/>
    </location>
</feature>
<feature type="transmembrane region" description="Helical; Name=1" evidence="1">
    <location>
        <begin position="27"/>
        <end position="49"/>
    </location>
</feature>
<feature type="topological domain" description="Cytoplasmic" evidence="1">
    <location>
        <begin position="50"/>
        <end position="57"/>
    </location>
</feature>
<feature type="transmembrane region" description="Helical; Name=2" evidence="1">
    <location>
        <begin position="58"/>
        <end position="79"/>
    </location>
</feature>
<feature type="topological domain" description="Extracellular" evidence="1">
    <location>
        <begin position="80"/>
        <end position="100"/>
    </location>
</feature>
<feature type="transmembrane region" description="Helical; Name=3" evidence="1">
    <location>
        <begin position="101"/>
        <end position="120"/>
    </location>
</feature>
<feature type="topological domain" description="Cytoplasmic" evidence="1">
    <location>
        <begin position="121"/>
        <end position="139"/>
    </location>
</feature>
<feature type="transmembrane region" description="Helical; Name=4" evidence="1">
    <location>
        <begin position="140"/>
        <end position="164"/>
    </location>
</feature>
<feature type="topological domain" description="Extracellular" evidence="1">
    <location>
        <begin position="165"/>
        <end position="205"/>
    </location>
</feature>
<feature type="transmembrane region" description="Helical; Name=5" evidence="1">
    <location>
        <begin position="206"/>
        <end position="226"/>
    </location>
</feature>
<feature type="topological domain" description="Cytoplasmic" evidence="1">
    <location>
        <begin position="227"/>
        <end position="239"/>
    </location>
</feature>
<feature type="transmembrane region" description="Helical; Name=6" evidence="1">
    <location>
        <begin position="240"/>
        <end position="260"/>
    </location>
</feature>
<feature type="topological domain" description="Extracellular" evidence="1">
    <location>
        <begin position="261"/>
        <end position="271"/>
    </location>
</feature>
<feature type="transmembrane region" description="Helical; Name=7" evidence="1">
    <location>
        <begin position="272"/>
        <end position="292"/>
    </location>
</feature>
<feature type="topological domain" description="Cytoplasmic" evidence="1">
    <location>
        <begin position="293"/>
        <end position="312"/>
    </location>
</feature>
<feature type="glycosylation site" description="N-linked (GlcNAc...) asparagine" evidence="1">
    <location>
        <position position="5"/>
    </location>
</feature>
<feature type="disulfide bond" evidence="2">
    <location>
        <begin position="97"/>
        <end position="179"/>
    </location>
</feature>
<proteinExistence type="inferred from homology"/>
<organism>
    <name type="scientific">Gallus gallus</name>
    <name type="common">Chicken</name>
    <dbReference type="NCBI Taxonomy" id="9031"/>
    <lineage>
        <taxon>Eukaryota</taxon>
        <taxon>Metazoa</taxon>
        <taxon>Chordata</taxon>
        <taxon>Craniata</taxon>
        <taxon>Vertebrata</taxon>
        <taxon>Euteleostomi</taxon>
        <taxon>Archelosauria</taxon>
        <taxon>Archosauria</taxon>
        <taxon>Dinosauria</taxon>
        <taxon>Saurischia</taxon>
        <taxon>Theropoda</taxon>
        <taxon>Coelurosauria</taxon>
        <taxon>Aves</taxon>
        <taxon>Neognathae</taxon>
        <taxon>Galloanserae</taxon>
        <taxon>Galliformes</taxon>
        <taxon>Phasianidae</taxon>
        <taxon>Phasianinae</taxon>
        <taxon>Gallus</taxon>
    </lineage>
</organism>
<protein>
    <recommendedName>
        <fullName>Olfactory receptor-like protein COR4</fullName>
    </recommendedName>
</protein>
<dbReference type="EMBL" id="Z79593">
    <property type="protein sequence ID" value="CAB01854.1"/>
    <property type="molecule type" value="Genomic_DNA"/>
</dbReference>
<dbReference type="RefSeq" id="NP_001026347.1">
    <property type="nucleotide sequence ID" value="NM_001031176.1"/>
</dbReference>
<dbReference type="SMR" id="P37070"/>
<dbReference type="FunCoup" id="P37070">
    <property type="interactions" value="6"/>
</dbReference>
<dbReference type="GlyCosmos" id="P37070">
    <property type="glycosylation" value="1 site, No reported glycans"/>
</dbReference>
<dbReference type="GlyGen" id="P37070">
    <property type="glycosylation" value="1 site"/>
</dbReference>
<dbReference type="GeneID" id="423002"/>
<dbReference type="KEGG" id="gga:423002"/>
<dbReference type="CTD" id="219417"/>
<dbReference type="VEuPathDB" id="HostDB:geneid_423002"/>
<dbReference type="InParanoid" id="P37070"/>
<dbReference type="OrthoDB" id="9889152at2759"/>
<dbReference type="PhylomeDB" id="P37070"/>
<dbReference type="PRO" id="PR:P37070"/>
<dbReference type="Proteomes" id="UP000000539">
    <property type="component" value="Unassembled WGS sequence"/>
</dbReference>
<dbReference type="GO" id="GO:0005886">
    <property type="term" value="C:plasma membrane"/>
    <property type="evidence" value="ECO:0007669"/>
    <property type="project" value="UniProtKB-SubCell"/>
</dbReference>
<dbReference type="GO" id="GO:0004930">
    <property type="term" value="F:G protein-coupled receptor activity"/>
    <property type="evidence" value="ECO:0007669"/>
    <property type="project" value="UniProtKB-KW"/>
</dbReference>
<dbReference type="GO" id="GO:0005549">
    <property type="term" value="F:odorant binding"/>
    <property type="evidence" value="ECO:0000318"/>
    <property type="project" value="GO_Central"/>
</dbReference>
<dbReference type="GO" id="GO:0004984">
    <property type="term" value="F:olfactory receptor activity"/>
    <property type="evidence" value="ECO:0000318"/>
    <property type="project" value="GO_Central"/>
</dbReference>
<dbReference type="CDD" id="cd15410">
    <property type="entry name" value="7tmA_OR5D-like"/>
    <property type="match status" value="1"/>
</dbReference>
<dbReference type="FunFam" id="1.20.1070.10:FF:000003">
    <property type="entry name" value="Olfactory receptor"/>
    <property type="match status" value="1"/>
</dbReference>
<dbReference type="Gene3D" id="1.20.1070.10">
    <property type="entry name" value="Rhodopsin 7-helix transmembrane proteins"/>
    <property type="match status" value="1"/>
</dbReference>
<dbReference type="InterPro" id="IPR000276">
    <property type="entry name" value="GPCR_Rhodpsn"/>
</dbReference>
<dbReference type="InterPro" id="IPR017452">
    <property type="entry name" value="GPCR_Rhodpsn_7TM"/>
</dbReference>
<dbReference type="InterPro" id="IPR000725">
    <property type="entry name" value="Olfact_rcpt"/>
</dbReference>
<dbReference type="PANTHER" id="PTHR48018">
    <property type="entry name" value="OLFACTORY RECEPTOR"/>
    <property type="match status" value="1"/>
</dbReference>
<dbReference type="Pfam" id="PF13853">
    <property type="entry name" value="7tm_4"/>
    <property type="match status" value="1"/>
</dbReference>
<dbReference type="PRINTS" id="PR00237">
    <property type="entry name" value="GPCRRHODOPSN"/>
</dbReference>
<dbReference type="PRINTS" id="PR00245">
    <property type="entry name" value="OLFACTORYR"/>
</dbReference>
<dbReference type="SUPFAM" id="SSF81321">
    <property type="entry name" value="Family A G protein-coupled receptor-like"/>
    <property type="match status" value="1"/>
</dbReference>
<dbReference type="PROSITE" id="PS00237">
    <property type="entry name" value="G_PROTEIN_RECEP_F1_1"/>
    <property type="match status" value="1"/>
</dbReference>
<dbReference type="PROSITE" id="PS50262">
    <property type="entry name" value="G_PROTEIN_RECEP_F1_2"/>
    <property type="match status" value="1"/>
</dbReference>
<accession>P37070</accession>
<evidence type="ECO:0000255" key="1"/>
<evidence type="ECO:0000255" key="2">
    <source>
        <dbReference type="PROSITE-ProRule" id="PRU00521"/>
    </source>
</evidence>
<evidence type="ECO:0000305" key="3"/>
<name>OLF4_CHICK</name>
<gene>
    <name type="primary">COR4</name>
</gene>
<sequence length="312" mass="35094">MASGNCTTPTTFILSGLTDNPGLQMPLFMVFLAIYTITLLTNLGLIALISVDLHLQTPMYIFLQNLSFTDAAYSTVITPKMLATFLEERKTISYIGCILQYFSFVLLTVTESLLLAVMAYDRYVAICKPLLYPSIMTKAVCWRLVKGLYSLAFLNSLVHTSGLLKLSFCSSNVVNHFFCDNSPLFQISSSSTTLNELLVFIFGSLFAMSSIITILISYVFIILTVVRIRSKDGKYKAFSTCTSHLMAVSLFHGTVIFMYLRPVKLFSLDTDKIASLFYTVVIPMLNPLIYSWRNKEVKDALRRVIATNVWIH</sequence>